<comment type="cofactor">
    <cofactor evidence="1">
        <name>thiamine diphosphate</name>
        <dbReference type="ChEBI" id="CHEBI:58937"/>
    </cofactor>
</comment>
<comment type="similarity">
    <text evidence="1">Belongs to the XFP family.</text>
</comment>
<name>PHK_BEII9</name>
<organism>
    <name type="scientific">Beijerinckia indica subsp. indica (strain ATCC 9039 / DSM 1715 / NCIMB 8712)</name>
    <dbReference type="NCBI Taxonomy" id="395963"/>
    <lineage>
        <taxon>Bacteria</taxon>
        <taxon>Pseudomonadati</taxon>
        <taxon>Pseudomonadota</taxon>
        <taxon>Alphaproteobacteria</taxon>
        <taxon>Hyphomicrobiales</taxon>
        <taxon>Beijerinckiaceae</taxon>
        <taxon>Beijerinckia</taxon>
    </lineage>
</organism>
<dbReference type="EC" id="4.1.2.-" evidence="1"/>
<dbReference type="EMBL" id="CP001016">
    <property type="protein sequence ID" value="ACB95823.1"/>
    <property type="molecule type" value="Genomic_DNA"/>
</dbReference>
<dbReference type="RefSeq" id="WP_012385178.1">
    <property type="nucleotide sequence ID" value="NC_010581.1"/>
</dbReference>
<dbReference type="SMR" id="B2IGR2"/>
<dbReference type="STRING" id="395963.Bind_2204"/>
<dbReference type="KEGG" id="bid:Bind_2204"/>
<dbReference type="eggNOG" id="COG3957">
    <property type="taxonomic scope" value="Bacteria"/>
</dbReference>
<dbReference type="HOGENOM" id="CLU_013954_2_0_5"/>
<dbReference type="Proteomes" id="UP000001695">
    <property type="component" value="Chromosome"/>
</dbReference>
<dbReference type="GO" id="GO:0016832">
    <property type="term" value="F:aldehyde-lyase activity"/>
    <property type="evidence" value="ECO:0007669"/>
    <property type="project" value="UniProtKB-UniRule"/>
</dbReference>
<dbReference type="GO" id="GO:0005975">
    <property type="term" value="P:carbohydrate metabolic process"/>
    <property type="evidence" value="ECO:0007669"/>
    <property type="project" value="InterPro"/>
</dbReference>
<dbReference type="CDD" id="cd02011">
    <property type="entry name" value="TPP_PK"/>
    <property type="match status" value="1"/>
</dbReference>
<dbReference type="FunFam" id="3.40.50.970:FF:000091">
    <property type="entry name" value="Xylulose-5-phosphate/fructose-6-phosphate phosphoketolase"/>
    <property type="match status" value="1"/>
</dbReference>
<dbReference type="Gene3D" id="3.40.50.920">
    <property type="match status" value="1"/>
</dbReference>
<dbReference type="Gene3D" id="3.40.50.970">
    <property type="match status" value="2"/>
</dbReference>
<dbReference type="HAMAP" id="MF_01403">
    <property type="entry name" value="Phosphoketolase"/>
    <property type="match status" value="1"/>
</dbReference>
<dbReference type="InterPro" id="IPR023962">
    <property type="entry name" value="Phosphoketolase"/>
</dbReference>
<dbReference type="InterPro" id="IPR029061">
    <property type="entry name" value="THDP-binding"/>
</dbReference>
<dbReference type="InterPro" id="IPR009014">
    <property type="entry name" value="Transketo_C/PFOR_II"/>
</dbReference>
<dbReference type="InterPro" id="IPR005593">
    <property type="entry name" value="Xul5P/Fru6P_PKetolase"/>
</dbReference>
<dbReference type="InterPro" id="IPR018969">
    <property type="entry name" value="Xul5P/Fru6P_PKetolase_C"/>
</dbReference>
<dbReference type="InterPro" id="IPR019790">
    <property type="entry name" value="Xul5P/Fru6P_PKetolase_CS"/>
</dbReference>
<dbReference type="InterPro" id="IPR018970">
    <property type="entry name" value="Xul5P/Fru6P_PKetolase_N"/>
</dbReference>
<dbReference type="InterPro" id="IPR019789">
    <property type="entry name" value="Xul5P/Fru6P_PKetolase_ThDP_BS"/>
</dbReference>
<dbReference type="NCBIfam" id="NF003616">
    <property type="entry name" value="PRK05261.1-1"/>
    <property type="match status" value="1"/>
</dbReference>
<dbReference type="NCBIfam" id="NF003617">
    <property type="entry name" value="PRK05261.1-2"/>
    <property type="match status" value="1"/>
</dbReference>
<dbReference type="NCBIfam" id="NF003619">
    <property type="entry name" value="PRK05261.1-4"/>
    <property type="match status" value="1"/>
</dbReference>
<dbReference type="NCBIfam" id="NF003621">
    <property type="entry name" value="PRK05261.1-6"/>
    <property type="match status" value="1"/>
</dbReference>
<dbReference type="PANTHER" id="PTHR31273">
    <property type="entry name" value="PHOSPHOKETOLASE-RELATED"/>
    <property type="match status" value="1"/>
</dbReference>
<dbReference type="PANTHER" id="PTHR31273:SF0">
    <property type="entry name" value="PHOSPHOKETOLASE-RELATED"/>
    <property type="match status" value="1"/>
</dbReference>
<dbReference type="Pfam" id="PF03894">
    <property type="entry name" value="XFP"/>
    <property type="match status" value="1"/>
</dbReference>
<dbReference type="Pfam" id="PF09363">
    <property type="entry name" value="XFP_C"/>
    <property type="match status" value="1"/>
</dbReference>
<dbReference type="Pfam" id="PF09364">
    <property type="entry name" value="XFP_N"/>
    <property type="match status" value="1"/>
</dbReference>
<dbReference type="PIRSF" id="PIRSF017245">
    <property type="entry name" value="Phosphoketolase"/>
    <property type="match status" value="1"/>
</dbReference>
<dbReference type="SUPFAM" id="SSF52518">
    <property type="entry name" value="Thiamin diphosphate-binding fold (THDP-binding)"/>
    <property type="match status" value="2"/>
</dbReference>
<dbReference type="PROSITE" id="PS60002">
    <property type="entry name" value="PHOSPHOKETOLASE_1"/>
    <property type="match status" value="1"/>
</dbReference>
<dbReference type="PROSITE" id="PS60003">
    <property type="entry name" value="PHOSPHOKETOLASE_2"/>
    <property type="match status" value="1"/>
</dbReference>
<protein>
    <recommendedName>
        <fullName evidence="1">Probable phosphoketolase</fullName>
        <ecNumber evidence="1">4.1.2.-</ecNumber>
    </recommendedName>
</protein>
<proteinExistence type="inferred from homology"/>
<evidence type="ECO:0000255" key="1">
    <source>
        <dbReference type="HAMAP-Rule" id="MF_01403"/>
    </source>
</evidence>
<gene>
    <name type="ordered locus">Bind_2204</name>
</gene>
<feature type="chain" id="PRO_1000145454" description="Probable phosphoketolase">
    <location>
        <begin position="1"/>
        <end position="795"/>
    </location>
</feature>
<accession>B2IGR2</accession>
<sequence>MDDRAHGPAGISQPLSPDLLQRLNAWWRAANYLSVAQLYLLDNPLLRQKLTLDHIKPRLLGHWGTTPGLNFIYVHLNRIIKERDLDILFIAGPGHGAPGLIANSWLEKTYSEVYPAVSQDIEGMTRLCRQFSFPVGIPSHAAPETPGSIHEGGELGYSLSHAFGAVFDNPDLIAACVIGDGEAETGPLATSWHANKFLDAARDGAVLPILHLNGYKIANPTVLGRIPSDELENLLQGYGYAPLFVEGDDPDIMHRHMAEALNVAFAGIAKIQRAARVEGHIERPRWPMLVLRSPKGWTGPKTVDGLKTEGFWRAHQVPFTIADKPEHLSLLESWLKSYRPEELFEESGALKPEIASLAPSGERRMSANPQANGGNLPRPLQIPDFTLHAVDVDYPGARTAEATFVMGQFLRDIMRANETNKNFRVFGPDETASNRLQALYDVTDKTWNAAFIAEDEHLDPTGRVMEILSEHTCQGWLEGYLLTGRHGLMSCYEAFIHIVDSMVNQHAKWLKTARGVPWRRPIASLNYLLTSHVWRQDHNGFSHQDPGFIDHIANKKSDIARVYLPPDANCLLYITDHCLRSWNRINVIVAGKQPEPQWLDMEEAISHCRAGLGIWSFASNDQDSEPDVVLACAGDVPTLETLAAADFLHTHLPEVKVRVVNIVDLFALEPQTRHPHGWSDKDFDTLFTKDKPVIFAYHGYPSLIHRLIYKRTNHSNFHVHGYQEEGSTTTPFDMVVRNRLDRFHLVGDVVDHLPKLGAKAAYVKQWLRDKFAEHERYIVAHGEDLPEIRHWRWPE</sequence>
<reference key="1">
    <citation type="journal article" date="2010" name="J. Bacteriol.">
        <title>Complete genome sequence of Beijerinckia indica subsp. indica.</title>
        <authorList>
            <person name="Tamas I."/>
            <person name="Dedysh S.N."/>
            <person name="Liesack W."/>
            <person name="Stott M.B."/>
            <person name="Alam M."/>
            <person name="Murrell J.C."/>
            <person name="Dunfield P.F."/>
        </authorList>
    </citation>
    <scope>NUCLEOTIDE SEQUENCE [LARGE SCALE GENOMIC DNA]</scope>
    <source>
        <strain>ATCC 9039 / DSM 1715 / NCIMB 8712</strain>
    </source>
</reference>
<keyword id="KW-0456">Lyase</keyword>
<keyword id="KW-1185">Reference proteome</keyword>
<keyword id="KW-0786">Thiamine pyrophosphate</keyword>